<name>Y252_AQUAE</name>
<feature type="chain" id="PRO_0000186846" description="Uncharacterized protein aq_252">
    <location>
        <begin position="1"/>
        <end position="139"/>
    </location>
</feature>
<keyword id="KW-1185">Reference proteome</keyword>
<gene>
    <name type="ordered locus">aq_252</name>
</gene>
<reference key="1">
    <citation type="journal article" date="1998" name="Nature">
        <title>The complete genome of the hyperthermophilic bacterium Aquifex aeolicus.</title>
        <authorList>
            <person name="Deckert G."/>
            <person name="Warren P.V."/>
            <person name="Gaasterland T."/>
            <person name="Young W.G."/>
            <person name="Lenox A.L."/>
            <person name="Graham D.E."/>
            <person name="Overbeek R."/>
            <person name="Snead M.A."/>
            <person name="Keller M."/>
            <person name="Aujay M."/>
            <person name="Huber R."/>
            <person name="Feldman R.A."/>
            <person name="Short J.M."/>
            <person name="Olsen G.J."/>
            <person name="Swanson R.V."/>
        </authorList>
    </citation>
    <scope>NUCLEOTIDE SEQUENCE [LARGE SCALE GENOMIC DNA]</scope>
    <source>
        <strain>VF5</strain>
    </source>
</reference>
<proteinExistence type="predicted"/>
<organism>
    <name type="scientific">Aquifex aeolicus (strain VF5)</name>
    <dbReference type="NCBI Taxonomy" id="224324"/>
    <lineage>
        <taxon>Bacteria</taxon>
        <taxon>Pseudomonadati</taxon>
        <taxon>Aquificota</taxon>
        <taxon>Aquificia</taxon>
        <taxon>Aquificales</taxon>
        <taxon>Aquificaceae</taxon>
        <taxon>Aquifex</taxon>
    </lineage>
</organism>
<dbReference type="EMBL" id="AE000657">
    <property type="protein sequence ID" value="AAC06573.1"/>
    <property type="molecule type" value="Genomic_DNA"/>
</dbReference>
<dbReference type="PIR" id="A70323">
    <property type="entry name" value="A70323"/>
</dbReference>
<dbReference type="RefSeq" id="NP_213173.1">
    <property type="nucleotide sequence ID" value="NC_000918.1"/>
</dbReference>
<dbReference type="RefSeq" id="WP_010880111.1">
    <property type="nucleotide sequence ID" value="NC_000918.1"/>
</dbReference>
<dbReference type="SMR" id="O66613"/>
<dbReference type="STRING" id="224324.aq_252"/>
<dbReference type="EnsemblBacteria" id="AAC06573">
    <property type="protein sequence ID" value="AAC06573"/>
    <property type="gene ID" value="aq_252"/>
</dbReference>
<dbReference type="KEGG" id="aae:aq_252"/>
<dbReference type="HOGENOM" id="CLU_1842385_0_0_0"/>
<dbReference type="InParanoid" id="O66613"/>
<dbReference type="Proteomes" id="UP000000798">
    <property type="component" value="Chromosome"/>
</dbReference>
<protein>
    <recommendedName>
        <fullName>Uncharacterized protein aq_252</fullName>
    </recommendedName>
</protein>
<sequence>MRFLILLLPFFLFAKEVCLDFSEIDTDDPYVKQAIIRKVEEYVLEAGFKVKCTENTLRIKVRANYREVPSTISARQRVSSYTLYLSVSLGEESFSASVPYSLPSGSLAELPRRKALEEAFSRIKLHIIKYFSREYLREK</sequence>
<accession>O66613</accession>